<name>DPNP1_ARATH</name>
<sequence>MAYEKELDAAKKAASLAARLCQKVQKALLQSDVQSKSDKSPVTVADYGSQAVVSLVLEKELSSEPFSLVAEEDSGDLRKDGSQDTLERITKLVNDTLATEESFNGSTLSTDDLLRAIDCGTSEGGPNGRHWVLDPIDGTKGFLRGDQYAVALGLLEEGKVVLGVLACPNLPLASIAGNNKNKSSSDEIGCLFFATIGSGTYMQLLDSKSSPVKVQVSSVENPEEASFFESFEGAHSLHDLSSSIANKLGVKAPPVRIDSQAKYGALSRGDGAIYLRFPHKGYREKIWDHVAGAIVVTEAGGIVTDAAGKPLDFSKGKYLDLDTGIIVANEKLMPLLLKAVRDSIAEQEKASAL</sequence>
<feature type="chain" id="PRO_0000142530" description="3'(2'),5'-bisphosphate nucleotidase 1">
    <location>
        <begin position="1"/>
        <end position="353"/>
    </location>
</feature>
<feature type="active site" description="Proton acceptor" evidence="1">
    <location>
        <position position="46"/>
    </location>
</feature>
<feature type="active site" description="Proton acceptor" evidence="1">
    <location>
        <position position="139"/>
    </location>
</feature>
<feature type="binding site" evidence="1">
    <location>
        <position position="71"/>
    </location>
    <ligand>
        <name>Mg(2+)</name>
        <dbReference type="ChEBI" id="CHEBI:18420"/>
        <label>1</label>
    </ligand>
</feature>
<feature type="binding site" evidence="1">
    <location>
        <position position="71"/>
    </location>
    <ligand>
        <name>Mg(2+)</name>
        <dbReference type="ChEBI" id="CHEBI:18420"/>
        <label>3</label>
    </ligand>
</feature>
<feature type="binding site" evidence="1">
    <location>
        <position position="134"/>
    </location>
    <ligand>
        <name>Mg(2+)</name>
        <dbReference type="ChEBI" id="CHEBI:18420"/>
        <label>1</label>
    </ligand>
</feature>
<feature type="binding site" evidence="5 11">
    <location>
        <position position="134"/>
    </location>
    <ligand>
        <name>Mg(2+)</name>
        <dbReference type="ChEBI" id="CHEBI:18420"/>
        <label>2</label>
    </ligand>
</feature>
<feature type="binding site" evidence="1">
    <location>
        <position position="136"/>
    </location>
    <ligand>
        <name>Mg(2+)</name>
        <dbReference type="ChEBI" id="CHEBI:18420"/>
        <label>1</label>
    </ligand>
</feature>
<feature type="binding site" evidence="5 11">
    <location>
        <position position="137"/>
    </location>
    <ligand>
        <name>Mg(2+)</name>
        <dbReference type="ChEBI" id="CHEBI:18420"/>
        <label>2</label>
    </ligand>
</feature>
<feature type="binding site" evidence="1">
    <location>
        <position position="139"/>
    </location>
    <ligand>
        <name>adenosine 3',5'-bisphosphate</name>
        <dbReference type="ChEBI" id="CHEBI:58343"/>
    </ligand>
</feature>
<feature type="binding site" evidence="1">
    <location>
        <position position="235"/>
    </location>
    <ligand>
        <name>adenosine 3',5'-bisphosphate</name>
        <dbReference type="ChEBI" id="CHEBI:58343"/>
    </ligand>
</feature>
<feature type="binding site" evidence="1">
    <location>
        <position position="235"/>
    </location>
    <ligand>
        <name>AMP</name>
        <dbReference type="ChEBI" id="CHEBI:456215"/>
    </ligand>
</feature>
<feature type="binding site" evidence="1">
    <location>
        <position position="259"/>
    </location>
    <ligand>
        <name>adenosine 3',5'-bisphosphate</name>
        <dbReference type="ChEBI" id="CHEBI:58343"/>
    </ligand>
</feature>
<feature type="binding site" evidence="1">
    <location>
        <position position="259"/>
    </location>
    <ligand>
        <name>AMP</name>
        <dbReference type="ChEBI" id="CHEBI:456215"/>
    </ligand>
</feature>
<feature type="binding site" evidence="1">
    <location>
        <position position="262"/>
    </location>
    <ligand>
        <name>adenosine 3',5'-bisphosphate</name>
        <dbReference type="ChEBI" id="CHEBI:58343"/>
    </ligand>
</feature>
<feature type="binding site" evidence="1">
    <location>
        <position position="262"/>
    </location>
    <ligand>
        <name>AMP</name>
        <dbReference type="ChEBI" id="CHEBI:456215"/>
    </ligand>
</feature>
<feature type="binding site" evidence="1">
    <location>
        <position position="276"/>
    </location>
    <ligand>
        <name>adenosine 3',5'-bisphosphate</name>
        <dbReference type="ChEBI" id="CHEBI:58343"/>
    </ligand>
</feature>
<feature type="binding site" evidence="1">
    <location>
        <position position="276"/>
    </location>
    <ligand>
        <name>AMP</name>
        <dbReference type="ChEBI" id="CHEBI:456215"/>
    </ligand>
</feature>
<feature type="binding site" evidence="1">
    <location>
        <position position="288"/>
    </location>
    <ligand>
        <name>adenosine 3',5'-bisphosphate</name>
        <dbReference type="ChEBI" id="CHEBI:58343"/>
    </ligand>
</feature>
<feature type="binding site" evidence="1">
    <location>
        <position position="288"/>
    </location>
    <ligand>
        <name>AMP</name>
        <dbReference type="ChEBI" id="CHEBI:456215"/>
    </ligand>
</feature>
<feature type="binding site" evidence="5 11">
    <location>
        <position position="288"/>
    </location>
    <ligand>
        <name>Mg(2+)</name>
        <dbReference type="ChEBI" id="CHEBI:18420"/>
        <label>2</label>
    </ligand>
</feature>
<feature type="mutagenesis site" description="In fry1-1; abolishes activity.">
    <location>
        <begin position="287"/>
        <end position="353"/>
    </location>
</feature>
<feature type="helix" evidence="12">
    <location>
        <begin position="4"/>
        <end position="26"/>
    </location>
</feature>
<feature type="helix" evidence="12">
    <location>
        <begin position="34"/>
        <end position="36"/>
    </location>
</feature>
<feature type="helix" evidence="12">
    <location>
        <begin position="40"/>
        <end position="60"/>
    </location>
</feature>
<feature type="turn" evidence="12">
    <location>
        <begin position="61"/>
        <end position="63"/>
    </location>
</feature>
<feature type="turn" evidence="12">
    <location>
        <begin position="76"/>
        <end position="78"/>
    </location>
</feature>
<feature type="turn" evidence="12">
    <location>
        <begin position="80"/>
        <end position="82"/>
    </location>
</feature>
<feature type="helix" evidence="12">
    <location>
        <begin position="83"/>
        <end position="96"/>
    </location>
</feature>
<feature type="strand" evidence="12">
    <location>
        <begin position="101"/>
        <end position="104"/>
    </location>
</feature>
<feature type="helix" evidence="12">
    <location>
        <begin position="110"/>
        <end position="118"/>
    </location>
</feature>
<feature type="strand" evidence="12">
    <location>
        <begin position="126"/>
        <end position="137"/>
    </location>
</feature>
<feature type="helix" evidence="12">
    <location>
        <begin position="139"/>
        <end position="143"/>
    </location>
</feature>
<feature type="strand" evidence="12">
    <location>
        <begin position="149"/>
        <end position="156"/>
    </location>
</feature>
<feature type="strand" evidence="12">
    <location>
        <begin position="159"/>
        <end position="173"/>
    </location>
</feature>
<feature type="strand" evidence="12">
    <location>
        <begin position="188"/>
        <end position="195"/>
    </location>
</feature>
<feature type="turn" evidence="12">
    <location>
        <begin position="196"/>
        <end position="198"/>
    </location>
</feature>
<feature type="strand" evidence="12">
    <location>
        <begin position="199"/>
        <end position="204"/>
    </location>
</feature>
<feature type="strand" evidence="12">
    <location>
        <begin position="227"/>
        <end position="229"/>
    </location>
</feature>
<feature type="helix" evidence="12">
    <location>
        <begin position="238"/>
        <end position="248"/>
    </location>
</feature>
<feature type="helix" evidence="12">
    <location>
        <begin position="261"/>
        <end position="267"/>
    </location>
</feature>
<feature type="strand" evidence="12">
    <location>
        <begin position="272"/>
        <end position="276"/>
    </location>
</feature>
<feature type="helix" evidence="12">
    <location>
        <begin position="286"/>
        <end position="288"/>
    </location>
</feature>
<feature type="helix" evidence="12">
    <location>
        <begin position="290"/>
        <end position="297"/>
    </location>
</feature>
<feature type="turn" evidence="12">
    <location>
        <begin position="298"/>
        <end position="300"/>
    </location>
</feature>
<feature type="strand" evidence="12">
    <location>
        <begin position="302"/>
        <end position="305"/>
    </location>
</feature>
<feature type="strand" evidence="12">
    <location>
        <begin position="315"/>
        <end position="318"/>
    </location>
</feature>
<feature type="strand" evidence="12">
    <location>
        <begin position="322"/>
        <end position="328"/>
    </location>
</feature>
<feature type="turn" evidence="12">
    <location>
        <begin position="330"/>
        <end position="332"/>
    </location>
</feature>
<feature type="helix" evidence="12">
    <location>
        <begin position="333"/>
        <end position="345"/>
    </location>
</feature>
<feature type="turn" evidence="12">
    <location>
        <begin position="346"/>
        <end position="348"/>
    </location>
</feature>
<feature type="helix" evidence="12">
    <location>
        <begin position="349"/>
        <end position="351"/>
    </location>
</feature>
<dbReference type="EC" id="3.1.3.7" evidence="6"/>
<dbReference type="EC" id="3.1.3.57" evidence="6"/>
<dbReference type="EMBL" id="U40433">
    <property type="protein sequence ID" value="AAC49263.1"/>
    <property type="molecule type" value="mRNA"/>
</dbReference>
<dbReference type="EMBL" id="AY034894">
    <property type="protein sequence ID" value="AAK58887.1"/>
    <property type="molecule type" value="mRNA"/>
</dbReference>
<dbReference type="EMBL" id="AB019227">
    <property type="protein sequence ID" value="BAA96901.1"/>
    <property type="molecule type" value="Genomic_DNA"/>
</dbReference>
<dbReference type="EMBL" id="CP002688">
    <property type="protein sequence ID" value="AED97825.2"/>
    <property type="molecule type" value="Genomic_DNA"/>
</dbReference>
<dbReference type="EMBL" id="BT005993">
    <property type="protein sequence ID" value="AAO64928.1"/>
    <property type="molecule type" value="mRNA"/>
</dbReference>
<dbReference type="EMBL" id="AK227460">
    <property type="protein sequence ID" value="BAE99463.1"/>
    <property type="molecule type" value="mRNA"/>
</dbReference>
<dbReference type="RefSeq" id="NP_201203.3">
    <property type="nucleotide sequence ID" value="NM_125794.5"/>
</dbReference>
<dbReference type="PDB" id="8F9Y">
    <property type="method" value="X-ray"/>
    <property type="resolution" value="3.60 A"/>
    <property type="chains" value="A=1-352"/>
</dbReference>
<dbReference type="PDBsum" id="8F9Y"/>
<dbReference type="SMR" id="Q42546"/>
<dbReference type="BioGRID" id="21761">
    <property type="interactions" value="6"/>
</dbReference>
<dbReference type="FunCoup" id="Q42546">
    <property type="interactions" value="1309"/>
</dbReference>
<dbReference type="STRING" id="3702.Q42546"/>
<dbReference type="PaxDb" id="3702-AT5G63980.1"/>
<dbReference type="ProteomicsDB" id="220401"/>
<dbReference type="EnsemblPlants" id="AT5G63980.1">
    <property type="protein sequence ID" value="AT5G63980.1"/>
    <property type="gene ID" value="AT5G63980"/>
</dbReference>
<dbReference type="GeneID" id="836519"/>
<dbReference type="Gramene" id="AT5G63980.1">
    <property type="protein sequence ID" value="AT5G63980.1"/>
    <property type="gene ID" value="AT5G63980"/>
</dbReference>
<dbReference type="KEGG" id="ath:AT5G63980"/>
<dbReference type="Araport" id="AT5G63980"/>
<dbReference type="TAIR" id="AT5G63980">
    <property type="gene designation" value="SAL1"/>
</dbReference>
<dbReference type="eggNOG" id="KOG1528">
    <property type="taxonomic scope" value="Eukaryota"/>
</dbReference>
<dbReference type="HOGENOM" id="CLU_033446_2_1_1"/>
<dbReference type="InParanoid" id="Q42546"/>
<dbReference type="OMA" id="MSYQQER"/>
<dbReference type="PhylomeDB" id="Q42546"/>
<dbReference type="BioCyc" id="ARA:AT5G63980-MONOMER"/>
<dbReference type="BRENDA" id="3.1.3.57">
    <property type="organism ID" value="399"/>
</dbReference>
<dbReference type="BRENDA" id="3.1.3.7">
    <property type="organism ID" value="399"/>
</dbReference>
<dbReference type="UniPathway" id="UPA00944"/>
<dbReference type="PRO" id="PR:Q42546"/>
<dbReference type="Proteomes" id="UP000006548">
    <property type="component" value="Chromosome 5"/>
</dbReference>
<dbReference type="ExpressionAtlas" id="Q42546">
    <property type="expression patterns" value="baseline and differential"/>
</dbReference>
<dbReference type="GO" id="GO:0008441">
    <property type="term" value="F:3'(2'),5'-bisphosphate nucleotidase activity"/>
    <property type="evidence" value="ECO:0007669"/>
    <property type="project" value="UniProtKB-EC"/>
</dbReference>
<dbReference type="GO" id="GO:0004441">
    <property type="term" value="F:inositol-1,4-bisphosphate 1-phosphatase activity"/>
    <property type="evidence" value="ECO:0007669"/>
    <property type="project" value="UniProtKB-EC"/>
</dbReference>
<dbReference type="GO" id="GO:0046872">
    <property type="term" value="F:metal ion binding"/>
    <property type="evidence" value="ECO:0007669"/>
    <property type="project" value="UniProtKB-KW"/>
</dbReference>
<dbReference type="GO" id="GO:0009738">
    <property type="term" value="P:abscisic acid-activated signaling pathway"/>
    <property type="evidence" value="ECO:0007669"/>
    <property type="project" value="UniProtKB-KW"/>
</dbReference>
<dbReference type="GO" id="GO:0006790">
    <property type="term" value="P:sulfur compound metabolic process"/>
    <property type="evidence" value="ECO:0007669"/>
    <property type="project" value="InterPro"/>
</dbReference>
<dbReference type="CDD" id="cd01517">
    <property type="entry name" value="PAP_phosphatase"/>
    <property type="match status" value="1"/>
</dbReference>
<dbReference type="FunFam" id="3.40.190.80:FF:000003">
    <property type="entry name" value="PAP-specific phosphatase HAL2-like"/>
    <property type="match status" value="1"/>
</dbReference>
<dbReference type="FunFam" id="3.30.540.10:FF:000016">
    <property type="entry name" value="SAL1 phosphatase"/>
    <property type="match status" value="1"/>
</dbReference>
<dbReference type="Gene3D" id="3.40.190.80">
    <property type="match status" value="1"/>
</dbReference>
<dbReference type="Gene3D" id="3.30.540.10">
    <property type="entry name" value="Fructose-1,6-Bisphosphatase, subunit A, domain 1"/>
    <property type="match status" value="1"/>
</dbReference>
<dbReference type="InterPro" id="IPR006239">
    <property type="entry name" value="DPNP"/>
</dbReference>
<dbReference type="InterPro" id="IPR020583">
    <property type="entry name" value="Inositol_monoP_metal-BS"/>
</dbReference>
<dbReference type="InterPro" id="IPR051090">
    <property type="entry name" value="Inositol_monoP_superfamily"/>
</dbReference>
<dbReference type="InterPro" id="IPR000760">
    <property type="entry name" value="Inositol_monophosphatase-like"/>
</dbReference>
<dbReference type="NCBIfam" id="TIGR01330">
    <property type="entry name" value="bisphos_HAL2"/>
    <property type="match status" value="1"/>
</dbReference>
<dbReference type="PANTHER" id="PTHR43200:SF6">
    <property type="entry name" value="3'(2'),5'-BISPHOSPHATE NUCLEOTIDASE"/>
    <property type="match status" value="1"/>
</dbReference>
<dbReference type="PANTHER" id="PTHR43200">
    <property type="entry name" value="PHOSPHATASE"/>
    <property type="match status" value="1"/>
</dbReference>
<dbReference type="Pfam" id="PF00459">
    <property type="entry name" value="Inositol_P"/>
    <property type="match status" value="1"/>
</dbReference>
<dbReference type="PRINTS" id="PR00377">
    <property type="entry name" value="IMPHPHTASES"/>
</dbReference>
<dbReference type="SUPFAM" id="SSF56655">
    <property type="entry name" value="Carbohydrate phosphatase"/>
    <property type="match status" value="1"/>
</dbReference>
<dbReference type="PROSITE" id="PS00629">
    <property type="entry name" value="IMP_1"/>
    <property type="match status" value="1"/>
</dbReference>
<organism>
    <name type="scientific">Arabidopsis thaliana</name>
    <name type="common">Mouse-ear cress</name>
    <dbReference type="NCBI Taxonomy" id="3702"/>
    <lineage>
        <taxon>Eukaryota</taxon>
        <taxon>Viridiplantae</taxon>
        <taxon>Streptophyta</taxon>
        <taxon>Embryophyta</taxon>
        <taxon>Tracheophyta</taxon>
        <taxon>Spermatophyta</taxon>
        <taxon>Magnoliopsida</taxon>
        <taxon>eudicotyledons</taxon>
        <taxon>Gunneridae</taxon>
        <taxon>Pentapetalae</taxon>
        <taxon>rosids</taxon>
        <taxon>malvids</taxon>
        <taxon>Brassicales</taxon>
        <taxon>Brassicaceae</taxon>
        <taxon>Camelineae</taxon>
        <taxon>Arabidopsis</taxon>
    </lineage>
</organism>
<reference key="1">
    <citation type="journal article" date="1996" name="Plant Cell">
        <title>The SAL1 gene of Arabidopsis, encoding an enzyme with 3'(2'),5'-bisphosphate nucleotidase and inositol polyphosphate 1-phosphatase activities, increases salt tolerance in yeast.</title>
        <authorList>
            <person name="Quintero F.J."/>
            <person name="Garciadeblas B."/>
            <person name="Rodriguez-Navarro A."/>
        </authorList>
    </citation>
    <scope>NUCLEOTIDE SEQUENCE [MRNA]</scope>
    <scope>FUNCTION</scope>
    <scope>CATALYTIC ACTIVITY</scope>
    <scope>SUBSTRATE SPECIFICITY</scope>
    <scope>COFACTOR</scope>
    <scope>BIOPHYSICOCHEMICAL PROPERTIES</scope>
    <scope>ACTIVITY REGULATION</scope>
    <source>
        <tissue>Root</tissue>
    </source>
</reference>
<reference key="2">
    <citation type="journal article" date="2001" name="Genes Dev.">
        <title>FIERY1 encoding an inositol polyphosphate 1-phosphatase is a negative regulator of abscisic acid and stress signaling in Arabidopsis.</title>
        <authorList>
            <person name="Xiong L."/>
            <person name="Lee B.-H."/>
            <person name="Ishitani M."/>
            <person name="Lee H."/>
            <person name="Zhang C."/>
            <person name="Zhu J.-K."/>
        </authorList>
    </citation>
    <scope>NUCLEOTIDE SEQUENCE [GENOMIC DNA]</scope>
    <scope>TISSUE SPECIFICITY</scope>
    <scope>FUNCTION</scope>
    <scope>MUTANT FRY1-1</scope>
    <source>
        <strain>cv. C24</strain>
    </source>
</reference>
<reference key="3">
    <citation type="journal article" date="2000" name="DNA Res.">
        <title>Structural analysis of Arabidopsis thaliana chromosome 5. X. Sequence features of the regions of 3,076,755 bp covered by sixty P1 and TAC clones.</title>
        <authorList>
            <person name="Sato S."/>
            <person name="Nakamura Y."/>
            <person name="Kaneko T."/>
            <person name="Katoh T."/>
            <person name="Asamizu E."/>
            <person name="Kotani H."/>
            <person name="Tabata S."/>
        </authorList>
    </citation>
    <scope>NUCLEOTIDE SEQUENCE [LARGE SCALE GENOMIC DNA]</scope>
    <source>
        <strain>cv. Columbia</strain>
    </source>
</reference>
<reference key="4">
    <citation type="journal article" date="2017" name="Plant J.">
        <title>Araport11: a complete reannotation of the Arabidopsis thaliana reference genome.</title>
        <authorList>
            <person name="Cheng C.Y."/>
            <person name="Krishnakumar V."/>
            <person name="Chan A.P."/>
            <person name="Thibaud-Nissen F."/>
            <person name="Schobel S."/>
            <person name="Town C.D."/>
        </authorList>
    </citation>
    <scope>GENOME REANNOTATION</scope>
    <source>
        <strain>cv. Columbia</strain>
    </source>
</reference>
<reference key="5">
    <citation type="journal article" date="2003" name="Science">
        <title>Empirical analysis of transcriptional activity in the Arabidopsis genome.</title>
        <authorList>
            <person name="Yamada K."/>
            <person name="Lim J."/>
            <person name="Dale J.M."/>
            <person name="Chen H."/>
            <person name="Shinn P."/>
            <person name="Palm C.J."/>
            <person name="Southwick A.M."/>
            <person name="Wu H.C."/>
            <person name="Kim C.J."/>
            <person name="Nguyen M."/>
            <person name="Pham P.K."/>
            <person name="Cheuk R.F."/>
            <person name="Karlin-Newmann G."/>
            <person name="Liu S.X."/>
            <person name="Lam B."/>
            <person name="Sakano H."/>
            <person name="Wu T."/>
            <person name="Yu G."/>
            <person name="Miranda M."/>
            <person name="Quach H.L."/>
            <person name="Tripp M."/>
            <person name="Chang C.H."/>
            <person name="Lee J.M."/>
            <person name="Toriumi M.J."/>
            <person name="Chan M.M."/>
            <person name="Tang C.C."/>
            <person name="Onodera C.S."/>
            <person name="Deng J.M."/>
            <person name="Akiyama K."/>
            <person name="Ansari Y."/>
            <person name="Arakawa T."/>
            <person name="Banh J."/>
            <person name="Banno F."/>
            <person name="Bowser L."/>
            <person name="Brooks S.Y."/>
            <person name="Carninci P."/>
            <person name="Chao Q."/>
            <person name="Choy N."/>
            <person name="Enju A."/>
            <person name="Goldsmith A.D."/>
            <person name="Gurjal M."/>
            <person name="Hansen N.F."/>
            <person name="Hayashizaki Y."/>
            <person name="Johnson-Hopson C."/>
            <person name="Hsuan V.W."/>
            <person name="Iida K."/>
            <person name="Karnes M."/>
            <person name="Khan S."/>
            <person name="Koesema E."/>
            <person name="Ishida J."/>
            <person name="Jiang P.X."/>
            <person name="Jones T."/>
            <person name="Kawai J."/>
            <person name="Kamiya A."/>
            <person name="Meyers C."/>
            <person name="Nakajima M."/>
            <person name="Narusaka M."/>
            <person name="Seki M."/>
            <person name="Sakurai T."/>
            <person name="Satou M."/>
            <person name="Tamse R."/>
            <person name="Vaysberg M."/>
            <person name="Wallender E.K."/>
            <person name="Wong C."/>
            <person name="Yamamura Y."/>
            <person name="Yuan S."/>
            <person name="Shinozaki K."/>
            <person name="Davis R.W."/>
            <person name="Theologis A."/>
            <person name="Ecker J.R."/>
        </authorList>
    </citation>
    <scope>NUCLEOTIDE SEQUENCE [LARGE SCALE MRNA]</scope>
    <source>
        <strain>cv. Columbia</strain>
    </source>
</reference>
<reference key="6">
    <citation type="submission" date="2006-07" db="EMBL/GenBank/DDBJ databases">
        <title>Large-scale analysis of RIKEN Arabidopsis full-length (RAFL) cDNAs.</title>
        <authorList>
            <person name="Totoki Y."/>
            <person name="Seki M."/>
            <person name="Ishida J."/>
            <person name="Nakajima M."/>
            <person name="Enju A."/>
            <person name="Kamiya A."/>
            <person name="Narusaka M."/>
            <person name="Shin-i T."/>
            <person name="Nakagawa M."/>
            <person name="Sakamoto N."/>
            <person name="Oishi K."/>
            <person name="Kohara Y."/>
            <person name="Kobayashi M."/>
            <person name="Toyoda A."/>
            <person name="Sakaki Y."/>
            <person name="Sakurai T."/>
            <person name="Iida K."/>
            <person name="Akiyama K."/>
            <person name="Satou M."/>
            <person name="Toyoda T."/>
            <person name="Konagaya A."/>
            <person name="Carninci P."/>
            <person name="Kawai J."/>
            <person name="Hayashizaki Y."/>
            <person name="Shinozaki K."/>
        </authorList>
    </citation>
    <scope>NUCLEOTIDE SEQUENCE [LARGE SCALE MRNA]</scope>
    <source>
        <strain>cv. Columbia</strain>
    </source>
</reference>
<reference key="7">
    <citation type="journal article" date="1999" name="Plant J.">
        <title>The Arabidopsis HAL2-like gene family includes a novel sodium-sensitive phosphatase.</title>
        <authorList>
            <person name="Gil-Mascarell R."/>
            <person name="Lopez-Coronado J.M."/>
            <person name="Belles J.M."/>
            <person name="Serrano R."/>
            <person name="Rodriguez P.L."/>
        </authorList>
    </citation>
    <scope>TISSUE SPECIFICITY</scope>
    <scope>CHARACTERIZATION</scope>
    <source>
        <strain>cv. Columbia</strain>
    </source>
</reference>
<reference key="8">
    <citation type="journal article" date="2007" name="Plant Cell">
        <title>Arabidopsis FIERY1, XRN2, and XRN3 are endogenous RNA silencing suppressors.</title>
        <authorList>
            <person name="Gy I."/>
            <person name="Gasciolli V."/>
            <person name="Lauressergues D."/>
            <person name="Morel J.-B."/>
            <person name="Gombert J."/>
            <person name="Proux F."/>
            <person name="Proux C."/>
            <person name="Vaucheret H."/>
            <person name="Mallory A.C."/>
        </authorList>
    </citation>
    <scope>FUNCTION</scope>
</reference>
<reference evidence="11" key="9">
    <citation type="journal article" date="2016" name="Proc. Natl. Acad. Sci. U.S.A.">
        <title>Sensing and signaling of oxidative stress in chloroplasts by inactivation of the SAL1 phosphoadenosine phosphatase.</title>
        <authorList>
            <person name="Chan K.X."/>
            <person name="Mabbitt P.D."/>
            <person name="Phua S.Y."/>
            <person name="Mueller J.W."/>
            <person name="Nisar N."/>
            <person name="Gigolashvili T."/>
            <person name="Stroeher E."/>
            <person name="Grassl J."/>
            <person name="Arlt W."/>
            <person name="Estavillo G.M."/>
            <person name="Jackson C.J."/>
            <person name="Pogson B.J."/>
        </authorList>
    </citation>
    <scope>X-RAY CRYSTALLOGRAPHY (3.05 ANGSTROMS) OF 1-346 IN COMPLEX WITH MG(2+) AND PHOSPHATE</scope>
</reference>
<keyword id="KW-0002">3D-structure</keyword>
<keyword id="KW-0938">Abscisic acid signaling pathway</keyword>
<keyword id="KW-0106">Calcium</keyword>
<keyword id="KW-0378">Hydrolase</keyword>
<keyword id="KW-0452">Lithium</keyword>
<keyword id="KW-0460">Magnesium</keyword>
<keyword id="KW-0479">Metal-binding</keyword>
<keyword id="KW-0511">Multifunctional enzyme</keyword>
<keyword id="KW-1185">Reference proteome</keyword>
<proteinExistence type="evidence at protein level"/>
<accession>Q42546</accession>
<accession>F4KC73</accession>
<accession>Q0WTT5</accession>
<comment type="function">
    <text evidence="3 4 6">Phosphatase that converts adenosine 3'-phosphate 5'-phosphosulfate (PAPS) to adenosine 5'-phosphosulfate (APS) and 3'(2')-phosphoadenosine 5'-phosphate (PAP) to AMP. May regulate the flux of sulfur in the sulfur-activation pathway by converting PAPS to APS. May play a role in the biosynthesis of sulfate conjugates and RNA processing. Is also able to hydrolyze inositol 1,4-bisphosphate and inositol 1,3,4-trisphosphate. Could be considered as a negative regulator of abscisic acid (ABA)- and stress-responsive genes, through modulating the inositol 1,4,5-trisphosphate (IP3) turnover. Is also involved in salt tolerance. Acts as a suppressor of virus- and transgene-induced silencing.</text>
</comment>
<comment type="catalytic activity">
    <reaction evidence="6">
        <text>3'-phosphoadenylyl sulfate + H2O = adenosine 5'-phosphosulfate + phosphate</text>
        <dbReference type="Rhea" id="RHEA:77639"/>
        <dbReference type="ChEBI" id="CHEBI:15377"/>
        <dbReference type="ChEBI" id="CHEBI:43474"/>
        <dbReference type="ChEBI" id="CHEBI:58243"/>
        <dbReference type="ChEBI" id="CHEBI:58339"/>
        <dbReference type="EC" id="3.1.3.7"/>
    </reaction>
    <physiologicalReaction direction="left-to-right" evidence="10">
        <dbReference type="Rhea" id="RHEA:77640"/>
    </physiologicalReaction>
</comment>
<comment type="catalytic activity">
    <reaction evidence="6">
        <text>adenosine 3',5'-bisphosphate + H2O = AMP + phosphate</text>
        <dbReference type="Rhea" id="RHEA:10040"/>
        <dbReference type="ChEBI" id="CHEBI:15377"/>
        <dbReference type="ChEBI" id="CHEBI:43474"/>
        <dbReference type="ChEBI" id="CHEBI:58343"/>
        <dbReference type="ChEBI" id="CHEBI:456215"/>
        <dbReference type="EC" id="3.1.3.7"/>
    </reaction>
    <physiologicalReaction direction="left-to-right" evidence="10">
        <dbReference type="Rhea" id="RHEA:10041"/>
    </physiologicalReaction>
</comment>
<comment type="catalytic activity">
    <reaction evidence="6">
        <text>adenosine 2',5'-bisphosphate + H2O = AMP + phosphate</text>
        <dbReference type="Rhea" id="RHEA:77643"/>
        <dbReference type="ChEBI" id="CHEBI:15377"/>
        <dbReference type="ChEBI" id="CHEBI:43474"/>
        <dbReference type="ChEBI" id="CHEBI:194156"/>
        <dbReference type="ChEBI" id="CHEBI:456215"/>
        <dbReference type="EC" id="3.1.3.7"/>
    </reaction>
    <physiologicalReaction direction="left-to-right" evidence="10">
        <dbReference type="Rhea" id="RHEA:77644"/>
    </physiologicalReaction>
</comment>
<comment type="catalytic activity">
    <reaction evidence="6">
        <text>1D-myo-inositol 1,4-bisphosphate + H2O = 1D-myo-inositol 4-phosphate + phosphate</text>
        <dbReference type="Rhea" id="RHEA:15553"/>
        <dbReference type="ChEBI" id="CHEBI:15377"/>
        <dbReference type="ChEBI" id="CHEBI:43474"/>
        <dbReference type="ChEBI" id="CHEBI:58282"/>
        <dbReference type="ChEBI" id="CHEBI:58469"/>
        <dbReference type="EC" id="3.1.3.57"/>
    </reaction>
    <physiologicalReaction direction="left-to-right" evidence="10">
        <dbReference type="Rhea" id="RHEA:15554"/>
    </physiologicalReaction>
</comment>
<comment type="catalytic activity">
    <reaction evidence="6">
        <text>1D-myo-inositol 1,3,4-trisphosphate + H2O = 1D-myo-inositol 3,4-bisphosphate + phosphate</text>
        <dbReference type="Rhea" id="RHEA:70319"/>
        <dbReference type="ChEBI" id="CHEBI:15377"/>
        <dbReference type="ChEBI" id="CHEBI:43474"/>
        <dbReference type="ChEBI" id="CHEBI:58414"/>
        <dbReference type="ChEBI" id="CHEBI:83241"/>
    </reaction>
    <physiologicalReaction direction="left-to-right" evidence="10">
        <dbReference type="Rhea" id="RHEA:70320"/>
    </physiologicalReaction>
</comment>
<comment type="cofactor">
    <cofactor evidence="6">
        <name>Mg(2+)</name>
        <dbReference type="ChEBI" id="CHEBI:18420"/>
    </cofactor>
</comment>
<comment type="activity regulation">
    <text evidence="6">Inhibited non-competitively by Li(+) (IC(50)=0.20 mM) and Na(+) (IC(50)=200 mM).</text>
</comment>
<comment type="biophysicochemical properties">
    <kinetics>
        <KM evidence="6">90 uM for 1D-myo-inositol 1,4-bisphosphate</KM>
        <text evidence="6">KM for adenosine 3',5'-bisphosphate is between 2 and 10 uM.</text>
    </kinetics>
    <phDependence>
        <text evidence="6">Optimum pH is 7.5.</text>
    </phDependence>
</comment>
<comment type="pathway">
    <text>Signal transduction; phosphatidylinositol signaling pathway.</text>
</comment>
<comment type="tissue specificity">
    <text evidence="2 3">Expressed in roots, leaves, stems, flowers and siliques.</text>
</comment>
<comment type="miscellaneous">
    <text>Mutation in the FRY1 gene results in super-induction of abscisic acid (ABA)- and stress-responsive genes, due to inositol 1,4,5-trisphosphate (IP3) accumulation.</text>
</comment>
<comment type="miscellaneous">
    <text evidence="6">Substrate preference is adenosine 3'-phosphate 5'-phosphosulfate (PAPS) &gt; 3'-phosphoadenosine 5'-phosphate (PAP) = 2'-phosphoadenosine 5'-phosphate &gt; inositol 1,4-bisphosphate = inositol 1,4,5-trisphosphate. No activity observed against 3' or 5'-AMP, inositol 1-phosphate, ATP, fructose 1,6-bisphosphate, or inositol hexaphosphate.</text>
</comment>
<comment type="similarity">
    <text evidence="9">Belongs to the inositol monophosphatase superfamily.</text>
</comment>
<evidence type="ECO:0000250" key="1">
    <source>
        <dbReference type="UniProtKB" id="P32179"/>
    </source>
</evidence>
<evidence type="ECO:0000269" key="2">
    <source>
    </source>
</evidence>
<evidence type="ECO:0000269" key="3">
    <source>
    </source>
</evidence>
<evidence type="ECO:0000269" key="4">
    <source>
    </source>
</evidence>
<evidence type="ECO:0000269" key="5">
    <source>
    </source>
</evidence>
<evidence type="ECO:0000269" key="6">
    <source>
    </source>
</evidence>
<evidence type="ECO:0000303" key="7">
    <source>
    </source>
</evidence>
<evidence type="ECO:0000303" key="8">
    <source>
    </source>
</evidence>
<evidence type="ECO:0000305" key="9"/>
<evidence type="ECO:0000305" key="10">
    <source>
    </source>
</evidence>
<evidence type="ECO:0007744" key="11">
    <source>
        <dbReference type="PDB" id="8F9Y"/>
    </source>
</evidence>
<evidence type="ECO:0007829" key="12">
    <source>
        <dbReference type="PDB" id="8F9Y"/>
    </source>
</evidence>
<gene>
    <name evidence="8" type="primary">SAL1</name>
    <name type="synonym">FRY1</name>
    <name type="ordered locus">At5g63980</name>
    <name type="ORF">MBM17.8</name>
</gene>
<protein>
    <recommendedName>
        <fullName evidence="8">3'(2'),5'-bisphosphate nucleotidase 1</fullName>
        <ecNumber evidence="6">3.1.3.7</ecNumber>
    </recommendedName>
    <alternativeName>
        <fullName>3'(2'),5'-bisphosphonucleoside 3'(2')-phosphohydrolase 1</fullName>
    </alternativeName>
    <alternativeName>
        <fullName evidence="7">3'-phosphoadenosine-5'-phosphate phosphatase 1</fullName>
        <shortName evidence="7">PAP phosphatase 1</shortName>
        <shortName evidence="7">PAPase 1</shortName>
    </alternativeName>
    <alternativeName>
        <fullName>DPNPase 1</fullName>
    </alternativeName>
    <alternativeName>
        <fullName evidence="8">Inositol polyphosphate 1-phosphatase 1</fullName>
        <shortName>IPPase 1</shortName>
    </alternativeName>
    <alternativeName>
        <fullName>Inositol-1,4-bisphosphate 1-phosphatase 1</fullName>
        <ecNumber evidence="6">3.1.3.57</ecNumber>
    </alternativeName>
    <alternativeName>
        <fullName>Phosphatase SAL1</fullName>
    </alternativeName>
    <alternativeName>
        <fullName>Protein FIERY 1</fullName>
    </alternativeName>
</protein>